<evidence type="ECO:0000250" key="1"/>
<evidence type="ECO:0000255" key="2"/>
<evidence type="ECO:0000305" key="3"/>
<dbReference type="EC" id="3.5.1.114"/>
<dbReference type="EMBL" id="BX323839">
    <property type="protein sequence ID" value="CAM14061.1"/>
    <property type="status" value="ALT_SEQ"/>
    <property type="molecule type" value="Genomic_DNA"/>
</dbReference>
<dbReference type="EMBL" id="BX323839">
    <property type="protein sequence ID" value="CAM14062.1"/>
    <property type="molecule type" value="Genomic_DNA"/>
</dbReference>
<dbReference type="EMBL" id="BC075914">
    <property type="protein sequence ID" value="AAH75914.1"/>
    <property type="molecule type" value="mRNA"/>
</dbReference>
<dbReference type="RefSeq" id="NP_001002347.1">
    <property type="nucleotide sequence ID" value="NM_001002347.1"/>
</dbReference>
<dbReference type="RefSeq" id="XP_009292806.1">
    <property type="nucleotide sequence ID" value="XM_009294531.2"/>
</dbReference>
<dbReference type="RefSeq" id="XP_017209311.1">
    <property type="nucleotide sequence ID" value="XM_017353822.1"/>
</dbReference>
<dbReference type="RefSeq" id="XP_021326628.1">
    <property type="nucleotide sequence ID" value="XM_021470953.2"/>
</dbReference>
<dbReference type="SMR" id="Q6DHQ3"/>
<dbReference type="FunCoup" id="Q6DHQ3">
    <property type="interactions" value="1"/>
</dbReference>
<dbReference type="STRING" id="7955.ENSDARP00000108439"/>
<dbReference type="PaxDb" id="7955-ENSDARP00000108439"/>
<dbReference type="Ensembl" id="ENSDART00000004233">
    <property type="protein sequence ID" value="ENSDARP00000023827"/>
    <property type="gene ID" value="ENSDARG00000005525"/>
</dbReference>
<dbReference type="Ensembl" id="ENSDART00000122217">
    <property type="protein sequence ID" value="ENSDARP00000108439"/>
    <property type="gene ID" value="ENSDARG00000005525"/>
</dbReference>
<dbReference type="GeneID" id="436619"/>
<dbReference type="KEGG" id="dre:436619"/>
<dbReference type="AGR" id="ZFIN:ZDB-GENE-040718-37"/>
<dbReference type="CTD" id="436619"/>
<dbReference type="ZFIN" id="ZDB-GENE-040718-37">
    <property type="gene designation" value="acy3.2"/>
</dbReference>
<dbReference type="eggNOG" id="ENOG502REAZ">
    <property type="taxonomic scope" value="Eukaryota"/>
</dbReference>
<dbReference type="HOGENOM" id="CLU_083292_0_0_1"/>
<dbReference type="InParanoid" id="Q6DHQ3"/>
<dbReference type="OMA" id="YPRDPTT"/>
<dbReference type="OrthoDB" id="8300214at2759"/>
<dbReference type="PhylomeDB" id="Q6DHQ3"/>
<dbReference type="TreeFam" id="TF328708"/>
<dbReference type="PRO" id="PR:Q6DHQ3"/>
<dbReference type="Proteomes" id="UP000000437">
    <property type="component" value="Chromosome 1"/>
</dbReference>
<dbReference type="Bgee" id="ENSDARG00000005525">
    <property type="expression patterns" value="Expressed in kidney and 32 other cell types or tissues"/>
</dbReference>
<dbReference type="ExpressionAtlas" id="Q6DHQ3">
    <property type="expression patterns" value="baseline and differential"/>
</dbReference>
<dbReference type="GO" id="GO:0016324">
    <property type="term" value="C:apical plasma membrane"/>
    <property type="evidence" value="ECO:0007669"/>
    <property type="project" value="UniProtKB-SubCell"/>
</dbReference>
<dbReference type="GO" id="GO:0005829">
    <property type="term" value="C:cytosol"/>
    <property type="evidence" value="ECO:0000318"/>
    <property type="project" value="GO_Central"/>
</dbReference>
<dbReference type="GO" id="GO:0004046">
    <property type="term" value="F:aminoacylase activity"/>
    <property type="evidence" value="ECO:0000318"/>
    <property type="project" value="GO_Central"/>
</dbReference>
<dbReference type="GO" id="GO:0016788">
    <property type="term" value="F:hydrolase activity, acting on ester bonds"/>
    <property type="evidence" value="ECO:0007669"/>
    <property type="project" value="InterPro"/>
</dbReference>
<dbReference type="GO" id="GO:0046872">
    <property type="term" value="F:metal ion binding"/>
    <property type="evidence" value="ECO:0007669"/>
    <property type="project" value="UniProtKB-KW"/>
</dbReference>
<dbReference type="CDD" id="cd06909">
    <property type="entry name" value="M14_ASPA"/>
    <property type="match status" value="1"/>
</dbReference>
<dbReference type="FunFam" id="3.40.630.10:FF:000025">
    <property type="entry name" value="aspartoacylase"/>
    <property type="match status" value="1"/>
</dbReference>
<dbReference type="Gene3D" id="2.20.25.160">
    <property type="match status" value="1"/>
</dbReference>
<dbReference type="Gene3D" id="3.40.630.10">
    <property type="entry name" value="Zn peptidases"/>
    <property type="match status" value="1"/>
</dbReference>
<dbReference type="HAMAP" id="MF_00704">
    <property type="entry name" value="Aspartoacylase"/>
    <property type="match status" value="1"/>
</dbReference>
<dbReference type="InterPro" id="IPR050178">
    <property type="entry name" value="AspA/AstE_fam"/>
</dbReference>
<dbReference type="InterPro" id="IPR016708">
    <property type="entry name" value="Aspartoacylase"/>
</dbReference>
<dbReference type="InterPro" id="IPR055438">
    <property type="entry name" value="AstE_AspA_cat"/>
</dbReference>
<dbReference type="InterPro" id="IPR007036">
    <property type="entry name" value="Aste_AspA_hybrid_dom"/>
</dbReference>
<dbReference type="NCBIfam" id="NF002601">
    <property type="entry name" value="PRK02259.1"/>
    <property type="match status" value="1"/>
</dbReference>
<dbReference type="PANTHER" id="PTHR15162">
    <property type="entry name" value="ASPARTOACYLASE"/>
    <property type="match status" value="1"/>
</dbReference>
<dbReference type="PANTHER" id="PTHR15162:SF5">
    <property type="entry name" value="N-ACYL-AROMATIC-L-AMINO ACID AMIDOHYDROLASE (CARBOXYLATE-FORMING)"/>
    <property type="match status" value="1"/>
</dbReference>
<dbReference type="Pfam" id="PF24827">
    <property type="entry name" value="AstE_AspA_cat"/>
    <property type="match status" value="1"/>
</dbReference>
<dbReference type="Pfam" id="PF04952">
    <property type="entry name" value="AstE_AspA_hybrid"/>
    <property type="match status" value="1"/>
</dbReference>
<dbReference type="PIRSF" id="PIRSF018001">
    <property type="entry name" value="Aspartoacylase"/>
    <property type="match status" value="1"/>
</dbReference>
<dbReference type="SUPFAM" id="SSF53187">
    <property type="entry name" value="Zn-dependent exopeptidases"/>
    <property type="match status" value="1"/>
</dbReference>
<protein>
    <recommendedName>
        <fullName>N-acyl-aromatic-L-amino acid amidohydrolase (carboxylate-forming) B</fullName>
        <ecNumber>3.5.1.114</ecNumber>
    </recommendedName>
    <alternativeName>
        <fullName>Aminoacylase-3.2</fullName>
        <shortName>ACY-3.2</shortName>
    </alternativeName>
    <alternativeName>
        <fullName>Aspartoacylase-2B</fullName>
    </alternativeName>
</protein>
<proteinExistence type="evidence at transcript level"/>
<sequence>MASVFLPALGGVAVCGGTHGNELSGVYLVQEMERQRKEKGDGVWPIPVTTVLSNPRAVKECRRYIDTDMNRCFSRDTLSTPITDSSPYEVRRAQELNNQLGPKESTGAIDMICDLHNTTSNMGLTLIHYTTSDWATLHICKYLQTKITKVPVRVMVLDVPYSDAYSLESVSKHGFSIEVGPQPHGVVRADIYVIMKEAVDLTIDWIHKFNSGTVFEGGDVEAFKIIKSVDYPRDPVTRSLNAAVHPQLQDRDFCLLKRGDPLFLSFSGETVKYEEEEPLHPLFINECAYYEKGIAFHLAKRMRLTIPAVQVQKD</sequence>
<comment type="function">
    <text evidence="1">Plays an important role in deacetylating mercapturic acids in kidney proximal tubules.</text>
</comment>
<comment type="catalytic activity">
    <reaction>
        <text>an N-acyl-aromatic L-alpha-amino acid + H2O = an aromatic L-alpha-amino acid + a carboxylate</text>
        <dbReference type="Rhea" id="RHEA:54184"/>
        <dbReference type="ChEBI" id="CHEBI:15377"/>
        <dbReference type="ChEBI" id="CHEBI:29067"/>
        <dbReference type="ChEBI" id="CHEBI:84824"/>
        <dbReference type="ChEBI" id="CHEBI:138093"/>
        <dbReference type="EC" id="3.5.1.114"/>
    </reaction>
</comment>
<comment type="catalytic activity">
    <reaction>
        <text>an N-acetyl-L-cysteine-S-conjugate + H2O = an S-substituted L-cysteine + acetate</text>
        <dbReference type="Rhea" id="RHEA:36855"/>
        <dbReference type="ChEBI" id="CHEBI:15377"/>
        <dbReference type="ChEBI" id="CHEBI:30089"/>
        <dbReference type="ChEBI" id="CHEBI:58717"/>
        <dbReference type="ChEBI" id="CHEBI:58718"/>
        <dbReference type="EC" id="3.5.1.114"/>
    </reaction>
</comment>
<comment type="cofactor">
    <cofactor evidence="3">
        <name>Zn(2+)</name>
        <dbReference type="ChEBI" id="CHEBI:29105"/>
    </cofactor>
    <text evidence="3">Binds 1 zinc ion per subunit.</text>
</comment>
<comment type="subunit">
    <text evidence="1">Homotetramer.</text>
</comment>
<comment type="subcellular location">
    <subcellularLocation>
        <location>Apical cell membrane</location>
        <topology>Peripheral membrane protein</topology>
    </subcellularLocation>
    <subcellularLocation>
        <location evidence="1">Cytoplasm</location>
    </subcellularLocation>
</comment>
<comment type="similarity">
    <text evidence="3">Belongs to the AspA/AstE family. Aspartoacylase subfamily.</text>
</comment>
<comment type="sequence caution" evidence="3">
    <conflict type="erroneous gene model prediction">
        <sequence resource="EMBL-CDS" id="CAM14061"/>
    </conflict>
</comment>
<keyword id="KW-1003">Cell membrane</keyword>
<keyword id="KW-0963">Cytoplasm</keyword>
<keyword id="KW-0378">Hydrolase</keyword>
<keyword id="KW-0472">Membrane</keyword>
<keyword id="KW-0479">Metal-binding</keyword>
<keyword id="KW-1185">Reference proteome</keyword>
<keyword id="KW-0862">Zinc</keyword>
<organism>
    <name type="scientific">Danio rerio</name>
    <name type="common">Zebrafish</name>
    <name type="synonym">Brachydanio rerio</name>
    <dbReference type="NCBI Taxonomy" id="7955"/>
    <lineage>
        <taxon>Eukaryota</taxon>
        <taxon>Metazoa</taxon>
        <taxon>Chordata</taxon>
        <taxon>Craniata</taxon>
        <taxon>Vertebrata</taxon>
        <taxon>Euteleostomi</taxon>
        <taxon>Actinopterygii</taxon>
        <taxon>Neopterygii</taxon>
        <taxon>Teleostei</taxon>
        <taxon>Ostariophysi</taxon>
        <taxon>Cypriniformes</taxon>
        <taxon>Danionidae</taxon>
        <taxon>Danioninae</taxon>
        <taxon>Danio</taxon>
    </lineage>
</organism>
<accession>Q6DHQ3</accession>
<accession>A2BG59</accession>
<reference key="1">
    <citation type="journal article" date="2013" name="Nature">
        <title>The zebrafish reference genome sequence and its relationship to the human genome.</title>
        <authorList>
            <person name="Howe K."/>
            <person name="Clark M.D."/>
            <person name="Torroja C.F."/>
            <person name="Torrance J."/>
            <person name="Berthelot C."/>
            <person name="Muffato M."/>
            <person name="Collins J.E."/>
            <person name="Humphray S."/>
            <person name="McLaren K."/>
            <person name="Matthews L."/>
            <person name="McLaren S."/>
            <person name="Sealy I."/>
            <person name="Caccamo M."/>
            <person name="Churcher C."/>
            <person name="Scott C."/>
            <person name="Barrett J.C."/>
            <person name="Koch R."/>
            <person name="Rauch G.J."/>
            <person name="White S."/>
            <person name="Chow W."/>
            <person name="Kilian B."/>
            <person name="Quintais L.T."/>
            <person name="Guerra-Assuncao J.A."/>
            <person name="Zhou Y."/>
            <person name="Gu Y."/>
            <person name="Yen J."/>
            <person name="Vogel J.H."/>
            <person name="Eyre T."/>
            <person name="Redmond S."/>
            <person name="Banerjee R."/>
            <person name="Chi J."/>
            <person name="Fu B."/>
            <person name="Langley E."/>
            <person name="Maguire S.F."/>
            <person name="Laird G.K."/>
            <person name="Lloyd D."/>
            <person name="Kenyon E."/>
            <person name="Donaldson S."/>
            <person name="Sehra H."/>
            <person name="Almeida-King J."/>
            <person name="Loveland J."/>
            <person name="Trevanion S."/>
            <person name="Jones M."/>
            <person name="Quail M."/>
            <person name="Willey D."/>
            <person name="Hunt A."/>
            <person name="Burton J."/>
            <person name="Sims S."/>
            <person name="McLay K."/>
            <person name="Plumb B."/>
            <person name="Davis J."/>
            <person name="Clee C."/>
            <person name="Oliver K."/>
            <person name="Clark R."/>
            <person name="Riddle C."/>
            <person name="Elliot D."/>
            <person name="Threadgold G."/>
            <person name="Harden G."/>
            <person name="Ware D."/>
            <person name="Begum S."/>
            <person name="Mortimore B."/>
            <person name="Kerry G."/>
            <person name="Heath P."/>
            <person name="Phillimore B."/>
            <person name="Tracey A."/>
            <person name="Corby N."/>
            <person name="Dunn M."/>
            <person name="Johnson C."/>
            <person name="Wood J."/>
            <person name="Clark S."/>
            <person name="Pelan S."/>
            <person name="Griffiths G."/>
            <person name="Smith M."/>
            <person name="Glithero R."/>
            <person name="Howden P."/>
            <person name="Barker N."/>
            <person name="Lloyd C."/>
            <person name="Stevens C."/>
            <person name="Harley J."/>
            <person name="Holt K."/>
            <person name="Panagiotidis G."/>
            <person name="Lovell J."/>
            <person name="Beasley H."/>
            <person name="Henderson C."/>
            <person name="Gordon D."/>
            <person name="Auger K."/>
            <person name="Wright D."/>
            <person name="Collins J."/>
            <person name="Raisen C."/>
            <person name="Dyer L."/>
            <person name="Leung K."/>
            <person name="Robertson L."/>
            <person name="Ambridge K."/>
            <person name="Leongamornlert D."/>
            <person name="McGuire S."/>
            <person name="Gilderthorp R."/>
            <person name="Griffiths C."/>
            <person name="Manthravadi D."/>
            <person name="Nichol S."/>
            <person name="Barker G."/>
            <person name="Whitehead S."/>
            <person name="Kay M."/>
            <person name="Brown J."/>
            <person name="Murnane C."/>
            <person name="Gray E."/>
            <person name="Humphries M."/>
            <person name="Sycamore N."/>
            <person name="Barker D."/>
            <person name="Saunders D."/>
            <person name="Wallis J."/>
            <person name="Babbage A."/>
            <person name="Hammond S."/>
            <person name="Mashreghi-Mohammadi M."/>
            <person name="Barr L."/>
            <person name="Martin S."/>
            <person name="Wray P."/>
            <person name="Ellington A."/>
            <person name="Matthews N."/>
            <person name="Ellwood M."/>
            <person name="Woodmansey R."/>
            <person name="Clark G."/>
            <person name="Cooper J."/>
            <person name="Tromans A."/>
            <person name="Grafham D."/>
            <person name="Skuce C."/>
            <person name="Pandian R."/>
            <person name="Andrews R."/>
            <person name="Harrison E."/>
            <person name="Kimberley A."/>
            <person name="Garnett J."/>
            <person name="Fosker N."/>
            <person name="Hall R."/>
            <person name="Garner P."/>
            <person name="Kelly D."/>
            <person name="Bird C."/>
            <person name="Palmer S."/>
            <person name="Gehring I."/>
            <person name="Berger A."/>
            <person name="Dooley C.M."/>
            <person name="Ersan-Urun Z."/>
            <person name="Eser C."/>
            <person name="Geiger H."/>
            <person name="Geisler M."/>
            <person name="Karotki L."/>
            <person name="Kirn A."/>
            <person name="Konantz J."/>
            <person name="Konantz M."/>
            <person name="Oberlander M."/>
            <person name="Rudolph-Geiger S."/>
            <person name="Teucke M."/>
            <person name="Lanz C."/>
            <person name="Raddatz G."/>
            <person name="Osoegawa K."/>
            <person name="Zhu B."/>
            <person name="Rapp A."/>
            <person name="Widaa S."/>
            <person name="Langford C."/>
            <person name="Yang F."/>
            <person name="Schuster S.C."/>
            <person name="Carter N.P."/>
            <person name="Harrow J."/>
            <person name="Ning Z."/>
            <person name="Herrero J."/>
            <person name="Searle S.M."/>
            <person name="Enright A."/>
            <person name="Geisler R."/>
            <person name="Plasterk R.H."/>
            <person name="Lee C."/>
            <person name="Westerfield M."/>
            <person name="de Jong P.J."/>
            <person name="Zon L.I."/>
            <person name="Postlethwait J.H."/>
            <person name="Nusslein-Volhard C."/>
            <person name="Hubbard T.J."/>
            <person name="Roest Crollius H."/>
            <person name="Rogers J."/>
            <person name="Stemple D.L."/>
        </authorList>
    </citation>
    <scope>NUCLEOTIDE SEQUENCE [LARGE SCALE GENOMIC DNA]</scope>
    <source>
        <strain>Tuebingen</strain>
    </source>
</reference>
<reference key="2">
    <citation type="submission" date="2004-07" db="EMBL/GenBank/DDBJ databases">
        <authorList>
            <consortium name="NIH - Zebrafish Gene Collection (ZGC) project"/>
        </authorList>
    </citation>
    <scope>NUCLEOTIDE SEQUENCE [LARGE SCALE MRNA]</scope>
</reference>
<gene>
    <name type="primary">acy3.2</name>
    <name type="ORF">si:ch211-217k17.4</name>
    <name type="ORF">zgc:92178</name>
</gene>
<name>ACY3B_DANRE</name>
<feature type="chain" id="PRO_0000363364" description="N-acyl-aromatic-L-amino acid amidohydrolase (carboxylate-forming) B">
    <location>
        <begin position="1"/>
        <end position="314"/>
    </location>
</feature>
<feature type="binding site" evidence="2">
    <location>
        <position position="19"/>
    </location>
    <ligand>
        <name>Zn(2+)</name>
        <dbReference type="ChEBI" id="CHEBI:29105"/>
    </ligand>
</feature>
<feature type="binding site" evidence="2">
    <location>
        <position position="22"/>
    </location>
    <ligand>
        <name>Zn(2+)</name>
        <dbReference type="ChEBI" id="CHEBI:29105"/>
    </ligand>
</feature>
<feature type="binding site" evidence="2">
    <location>
        <position position="63"/>
    </location>
    <ligand>
        <name>substrate</name>
    </ligand>
</feature>
<feature type="binding site" evidence="2">
    <location>
        <begin position="70"/>
        <end position="71"/>
    </location>
    <ligand>
        <name>substrate</name>
    </ligand>
</feature>
<feature type="binding site" evidence="2">
    <location>
        <position position="116"/>
    </location>
    <ligand>
        <name>Zn(2+)</name>
        <dbReference type="ChEBI" id="CHEBI:29105"/>
    </ligand>
</feature>
<feature type="binding site" evidence="2">
    <location>
        <position position="178"/>
    </location>
    <ligand>
        <name>substrate</name>
    </ligand>
</feature>
<feature type="binding site" evidence="2">
    <location>
        <position position="289"/>
    </location>
    <ligand>
        <name>substrate</name>
    </ligand>
</feature>